<comment type="function">
    <text>Component of the cuticle of migratory locust which contains more than 100 different structural proteins.</text>
</comment>
<comment type="domain">
    <text>The tetrapeptide (A-A-P-[AV]) repeats found throughout the protein are also present in many proteins constituting the protective envelope of other species.</text>
</comment>
<organism>
    <name type="scientific">Locusta migratoria</name>
    <name type="common">Migratory locust</name>
    <dbReference type="NCBI Taxonomy" id="7004"/>
    <lineage>
        <taxon>Eukaryota</taxon>
        <taxon>Metazoa</taxon>
        <taxon>Ecdysozoa</taxon>
        <taxon>Arthropoda</taxon>
        <taxon>Hexapoda</taxon>
        <taxon>Insecta</taxon>
        <taxon>Pterygota</taxon>
        <taxon>Neoptera</taxon>
        <taxon>Polyneoptera</taxon>
        <taxon>Orthoptera</taxon>
        <taxon>Caelifera</taxon>
        <taxon>Acrididea</taxon>
        <taxon>Acridomorpha</taxon>
        <taxon>Acridoidea</taxon>
        <taxon>Acrididae</taxon>
        <taxon>Oedipodinae</taxon>
        <taxon>Locusta</taxon>
    </lineage>
</organism>
<accession>P04375</accession>
<dbReference type="PIR" id="A03327">
    <property type="entry name" value="UCLQ38"/>
</dbReference>
<dbReference type="GO" id="GO:0042302">
    <property type="term" value="F:structural constituent of cuticle"/>
    <property type="evidence" value="ECO:0007669"/>
    <property type="project" value="UniProtKB-KW"/>
</dbReference>
<sequence length="163" mass="15321">GYLGGIAAPVGYAAPAVGYAAPAIAAAPVAVAHAVAPAAASVANTYRISQTARVLAAPAAYAAPAVAAAPAIGYAAPAIAAAPALGYARYAAAAPVAVAHAAVPAAASVANTYRISQTARLLAAPAVAHAPVAYAAPAAYAAPAIGYGYGGLAYGAAPVAKVY</sequence>
<proteinExistence type="evidence at protein level"/>
<feature type="chain" id="PRO_0000196105" description="Cuticle protein 38">
    <location>
        <begin position="1"/>
        <end position="163"/>
    </location>
</feature>
<feature type="repeat" description="1">
    <location>
        <begin position="7"/>
        <end position="10"/>
    </location>
</feature>
<feature type="repeat" description="2">
    <location>
        <begin position="13"/>
        <end position="16"/>
    </location>
</feature>
<feature type="repeat" description="3">
    <location>
        <begin position="20"/>
        <end position="23"/>
    </location>
</feature>
<feature type="repeat" description="4">
    <location>
        <begin position="26"/>
        <end position="29"/>
    </location>
</feature>
<feature type="repeat" description="5">
    <location>
        <begin position="56"/>
        <end position="59"/>
    </location>
</feature>
<feature type="repeat" description="6">
    <location>
        <begin position="62"/>
        <end position="65"/>
    </location>
</feature>
<feature type="repeat" description="7">
    <location>
        <begin position="68"/>
        <end position="71"/>
    </location>
</feature>
<feature type="repeat" description="8">
    <location>
        <begin position="75"/>
        <end position="78"/>
    </location>
</feature>
<feature type="repeat" description="9">
    <location>
        <begin position="81"/>
        <end position="84"/>
    </location>
</feature>
<feature type="repeat" description="10">
    <location>
        <begin position="93"/>
        <end position="96"/>
    </location>
</feature>
<feature type="repeat" description="11">
    <location>
        <begin position="123"/>
        <end position="126"/>
    </location>
</feature>
<feature type="repeat" description="12">
    <location>
        <begin position="135"/>
        <end position="138"/>
    </location>
</feature>
<feature type="repeat" description="13">
    <location>
        <begin position="141"/>
        <end position="144"/>
    </location>
</feature>
<feature type="repeat" description="14">
    <location>
        <begin position="156"/>
        <end position="159"/>
    </location>
</feature>
<keyword id="KW-0193">Cuticle</keyword>
<keyword id="KW-0903">Direct protein sequencing</keyword>
<keyword id="KW-0677">Repeat</keyword>
<reference key="1">
    <citation type="journal article" date="1986" name="Biochem. J.">
        <title>Primary structure of a structural protein from the cuticle of the migratory locust, Locusta migratoria.</title>
        <authorList>
            <person name="Hoejrup P."/>
            <person name="Andersen S.O."/>
            <person name="Roepstorff P."/>
        </authorList>
    </citation>
    <scope>PROTEIN SEQUENCE</scope>
</reference>
<reference key="2">
    <citation type="journal article" date="1986" name="Eur. J. Biochem.">
        <title>Isolation, characterization, and N-terminal sequence studies of cuticular proteins from the migratory locust, Locusta migratoria.</title>
        <authorList>
            <person name="Hoejrup P."/>
            <person name="Andersen S.O."/>
            <person name="Roepstorff P."/>
        </authorList>
    </citation>
    <scope>PROTEIN SEQUENCE OF 1-30</scope>
</reference>
<protein>
    <recommendedName>
        <fullName>Cuticle protein 38</fullName>
    </recommendedName>
    <alternativeName>
        <fullName>LM-ACP 38</fullName>
        <shortName>LM-38</shortName>
    </alternativeName>
</protein>
<name>CU38_LOCMI</name>